<organism>
    <name type="scientific">Eremothecium gossypii (strain ATCC 10895 / CBS 109.51 / FGSC 9923 / NRRL Y-1056)</name>
    <name type="common">Yeast</name>
    <name type="synonym">Ashbya gossypii</name>
    <dbReference type="NCBI Taxonomy" id="284811"/>
    <lineage>
        <taxon>Eukaryota</taxon>
        <taxon>Fungi</taxon>
        <taxon>Dikarya</taxon>
        <taxon>Ascomycota</taxon>
        <taxon>Saccharomycotina</taxon>
        <taxon>Saccharomycetes</taxon>
        <taxon>Saccharomycetales</taxon>
        <taxon>Saccharomycetaceae</taxon>
        <taxon>Eremothecium</taxon>
    </lineage>
</organism>
<protein>
    <recommendedName>
        <fullName>Restriction of telomere capping protein 1</fullName>
    </recommendedName>
</protein>
<proteinExistence type="inferred from homology"/>
<keyword id="KW-0479">Metal-binding</keyword>
<keyword id="KW-1185">Reference proteome</keyword>
<keyword id="KW-0677">Repeat</keyword>
<keyword id="KW-0926">Vacuole</keyword>
<keyword id="KW-0853">WD repeat</keyword>
<keyword id="KW-0862">Zinc</keyword>
<keyword id="KW-0863">Zinc-finger</keyword>
<evidence type="ECO:0000250" key="1"/>
<evidence type="ECO:0000255" key="2">
    <source>
        <dbReference type="PROSITE-ProRule" id="PRU00175"/>
    </source>
</evidence>
<evidence type="ECO:0000256" key="3">
    <source>
        <dbReference type="SAM" id="MobiDB-lite"/>
    </source>
</evidence>
<evidence type="ECO:0000305" key="4"/>
<feature type="chain" id="PRO_0000408776" description="Restriction of telomere capping protein 1">
    <location>
        <begin position="1"/>
        <end position="1361"/>
    </location>
</feature>
<feature type="repeat" description="WD 1">
    <location>
        <begin position="180"/>
        <end position="221"/>
    </location>
</feature>
<feature type="repeat" description="WD 2">
    <location>
        <begin position="229"/>
        <end position="269"/>
    </location>
</feature>
<feature type="repeat" description="WD 3">
    <location>
        <begin position="277"/>
        <end position="315"/>
    </location>
</feature>
<feature type="repeat" description="WD 4">
    <location>
        <begin position="337"/>
        <end position="376"/>
    </location>
</feature>
<feature type="repeat" description="WD 5">
    <location>
        <begin position="405"/>
        <end position="452"/>
    </location>
</feature>
<feature type="repeat" description="WD 6">
    <location>
        <begin position="455"/>
        <end position="493"/>
    </location>
</feature>
<feature type="repeat" description="WD 7">
    <location>
        <begin position="849"/>
        <end position="890"/>
    </location>
</feature>
<feature type="repeat" description="WD 8">
    <location>
        <begin position="1146"/>
        <end position="1192"/>
    </location>
</feature>
<feature type="repeat" description="WD 9">
    <location>
        <begin position="1240"/>
        <end position="1278"/>
    </location>
</feature>
<feature type="zinc finger region" description="RING-type; degenerate" evidence="2">
    <location>
        <begin position="1314"/>
        <end position="1356"/>
    </location>
</feature>
<feature type="region of interest" description="Disordered" evidence="3">
    <location>
        <begin position="1"/>
        <end position="104"/>
    </location>
</feature>
<feature type="region of interest" description="Disordered" evidence="3">
    <location>
        <begin position="564"/>
        <end position="593"/>
    </location>
</feature>
<feature type="region of interest" description="Disordered" evidence="3">
    <location>
        <begin position="896"/>
        <end position="916"/>
    </location>
</feature>
<feature type="region of interest" description="Disordered" evidence="3">
    <location>
        <begin position="953"/>
        <end position="982"/>
    </location>
</feature>
<feature type="region of interest" description="Disordered" evidence="3">
    <location>
        <begin position="1091"/>
        <end position="1113"/>
    </location>
</feature>
<feature type="compositionally biased region" description="Polar residues" evidence="3">
    <location>
        <begin position="39"/>
        <end position="48"/>
    </location>
</feature>
<feature type="compositionally biased region" description="Polar residues" evidence="3">
    <location>
        <begin position="64"/>
        <end position="73"/>
    </location>
</feature>
<feature type="compositionally biased region" description="Basic and acidic residues" evidence="3">
    <location>
        <begin position="566"/>
        <end position="593"/>
    </location>
</feature>
<feature type="compositionally biased region" description="Polar residues" evidence="3">
    <location>
        <begin position="958"/>
        <end position="971"/>
    </location>
</feature>
<feature type="compositionally biased region" description="Low complexity" evidence="3">
    <location>
        <begin position="1091"/>
        <end position="1101"/>
    </location>
</feature>
<comment type="function">
    <text evidence="1">May be involved in a process influencing telomere capping.</text>
</comment>
<comment type="subcellular location">
    <subcellularLocation>
        <location evidence="1">Vacuole</location>
    </subcellularLocation>
</comment>
<comment type="similarity">
    <text evidence="4">Belongs to the WD repeat RTC1 family.</text>
</comment>
<gene>
    <name type="primary">RTC1</name>
    <name type="ordered locus">ADL186C</name>
</gene>
<name>RTC1_EREGS</name>
<dbReference type="EMBL" id="AE016817">
    <property type="protein sequence ID" value="AAS51734.2"/>
    <property type="molecule type" value="Genomic_DNA"/>
</dbReference>
<dbReference type="RefSeq" id="NP_983910.2">
    <property type="nucleotide sequence ID" value="NM_209263.2"/>
</dbReference>
<dbReference type="SMR" id="Q75AV6"/>
<dbReference type="FunCoup" id="Q75AV6">
    <property type="interactions" value="135"/>
</dbReference>
<dbReference type="STRING" id="284811.Q75AV6"/>
<dbReference type="EnsemblFungi" id="AAS51734">
    <property type="protein sequence ID" value="AAS51734"/>
    <property type="gene ID" value="AGOS_ADL186C"/>
</dbReference>
<dbReference type="GeneID" id="4620052"/>
<dbReference type="KEGG" id="ago:AGOS_ADL186C"/>
<dbReference type="eggNOG" id="KOG0269">
    <property type="taxonomic scope" value="Eukaryota"/>
</dbReference>
<dbReference type="HOGENOM" id="CLU_008512_0_0_1"/>
<dbReference type="InParanoid" id="Q75AV6"/>
<dbReference type="OMA" id="GRDGKCC"/>
<dbReference type="OrthoDB" id="60955at2759"/>
<dbReference type="Proteomes" id="UP000000591">
    <property type="component" value="Chromosome IV"/>
</dbReference>
<dbReference type="GO" id="GO:0005829">
    <property type="term" value="C:cytosol"/>
    <property type="evidence" value="ECO:0000318"/>
    <property type="project" value="GO_Central"/>
</dbReference>
<dbReference type="GO" id="GO:0061700">
    <property type="term" value="C:GATOR2 complex"/>
    <property type="evidence" value="ECO:0000318"/>
    <property type="project" value="GO_Central"/>
</dbReference>
<dbReference type="GO" id="GO:0005774">
    <property type="term" value="C:vacuolar membrane"/>
    <property type="evidence" value="ECO:0000318"/>
    <property type="project" value="GO_Central"/>
</dbReference>
<dbReference type="GO" id="GO:0008270">
    <property type="term" value="F:zinc ion binding"/>
    <property type="evidence" value="ECO:0007669"/>
    <property type="project" value="UniProtKB-KW"/>
</dbReference>
<dbReference type="GO" id="GO:0016239">
    <property type="term" value="P:positive regulation of macroautophagy"/>
    <property type="evidence" value="ECO:0000318"/>
    <property type="project" value="GO_Central"/>
</dbReference>
<dbReference type="GO" id="GO:1904263">
    <property type="term" value="P:positive regulation of TORC1 signaling"/>
    <property type="evidence" value="ECO:0000318"/>
    <property type="project" value="GO_Central"/>
</dbReference>
<dbReference type="CDD" id="cd16488">
    <property type="entry name" value="mRING-H2-C3H3C2_Mio-like"/>
    <property type="match status" value="1"/>
</dbReference>
<dbReference type="Gene3D" id="2.130.10.10">
    <property type="entry name" value="YVTN repeat-like/Quinoprotein amine dehydrogenase"/>
    <property type="match status" value="2"/>
</dbReference>
<dbReference type="InterPro" id="IPR015943">
    <property type="entry name" value="WD40/YVTN_repeat-like_dom_sf"/>
</dbReference>
<dbReference type="InterPro" id="IPR019775">
    <property type="entry name" value="WD40_repeat_CS"/>
</dbReference>
<dbReference type="InterPro" id="IPR036322">
    <property type="entry name" value="WD40_repeat_dom_sf"/>
</dbReference>
<dbReference type="InterPro" id="IPR001680">
    <property type="entry name" value="WD40_rpt"/>
</dbReference>
<dbReference type="InterPro" id="IPR037590">
    <property type="entry name" value="WDR24"/>
</dbReference>
<dbReference type="InterPro" id="IPR049566">
    <property type="entry name" value="WDR59_RTC1-like_RING_Znf"/>
</dbReference>
<dbReference type="InterPro" id="IPR001841">
    <property type="entry name" value="Znf_RING"/>
</dbReference>
<dbReference type="PANTHER" id="PTHR46200">
    <property type="entry name" value="GATOR COMPLEX PROTEIN WDR24"/>
    <property type="match status" value="1"/>
</dbReference>
<dbReference type="PANTHER" id="PTHR46200:SF1">
    <property type="entry name" value="GATOR COMPLEX PROTEIN WDR24"/>
    <property type="match status" value="1"/>
</dbReference>
<dbReference type="Pfam" id="PF00400">
    <property type="entry name" value="WD40"/>
    <property type="match status" value="2"/>
</dbReference>
<dbReference type="Pfam" id="PF17120">
    <property type="entry name" value="zf-RING_16"/>
    <property type="match status" value="1"/>
</dbReference>
<dbReference type="SMART" id="SM00320">
    <property type="entry name" value="WD40"/>
    <property type="match status" value="4"/>
</dbReference>
<dbReference type="SUPFAM" id="SSF50978">
    <property type="entry name" value="WD40 repeat-like"/>
    <property type="match status" value="1"/>
</dbReference>
<dbReference type="PROSITE" id="PS00678">
    <property type="entry name" value="WD_REPEATS_1"/>
    <property type="match status" value="1"/>
</dbReference>
<dbReference type="PROSITE" id="PS50082">
    <property type="entry name" value="WD_REPEATS_2"/>
    <property type="match status" value="2"/>
</dbReference>
<dbReference type="PROSITE" id="PS50294">
    <property type="entry name" value="WD_REPEATS_REGION"/>
    <property type="match status" value="1"/>
</dbReference>
<dbReference type="PROSITE" id="PS50089">
    <property type="entry name" value="ZF_RING_2"/>
    <property type="match status" value="1"/>
</dbReference>
<reference key="1">
    <citation type="journal article" date="2004" name="Science">
        <title>The Ashbya gossypii genome as a tool for mapping the ancient Saccharomyces cerevisiae genome.</title>
        <authorList>
            <person name="Dietrich F.S."/>
            <person name="Voegeli S."/>
            <person name="Brachat S."/>
            <person name="Lerch A."/>
            <person name="Gates K."/>
            <person name="Steiner S."/>
            <person name="Mohr C."/>
            <person name="Poehlmann R."/>
            <person name="Luedi P."/>
            <person name="Choi S."/>
            <person name="Wing R.A."/>
            <person name="Flavier A."/>
            <person name="Gaffney T.D."/>
            <person name="Philippsen P."/>
        </authorList>
    </citation>
    <scope>NUCLEOTIDE SEQUENCE [LARGE SCALE GENOMIC DNA]</scope>
    <source>
        <strain>ATCC 10895 / CBS 109.51 / FGSC 9923 / NRRL Y-1056</strain>
    </source>
</reference>
<reference key="2">
    <citation type="journal article" date="2013" name="G3 (Bethesda)">
        <title>Genomes of Ashbya fungi isolated from insects reveal four mating-type loci, numerous translocations, lack of transposons, and distinct gene duplications.</title>
        <authorList>
            <person name="Dietrich F.S."/>
            <person name="Voegeli S."/>
            <person name="Kuo S."/>
            <person name="Philippsen P."/>
        </authorList>
    </citation>
    <scope>GENOME REANNOTATION</scope>
    <source>
        <strain>ATCC 10895 / CBS 109.51 / FGSC 9923 / NRRL Y-1056</strain>
    </source>
</reference>
<accession>Q75AV6</accession>
<sequence length="1361" mass="150385">MGARRESGLHSFLNRKTPPTADMQQGSGGTRPQPFSRFTYGSKSAQSSGGMGGQVACSPKGRGSQRSLLSSNFPFMESVFEDRTAAPQRTPTPRDERSEYFGEAEGSSGLRSSLQCNRELASLDKINDAQARMVVVAGKSHLGLYKFDEAYRMQQVHDYMTPGSLGGGTKFSSSMRRNMRKISTISDVKAGFHHHKNYIAICGTSTSVSIYDINRASAKDSPLITTLSEHSRSINSVDFNMGQTHLLISGGQDGCIKVWDLRSHSYKVNRSDLNFNSGSDSVRDVKWMPTYDFASLGADTSLCSSGRSNKFASVHDSGLLLTFDMRQPNQVERKINAHSGPGLCMHWHPHMDYIISGGRDGKCALWYVGDKVNSMVSVPQGHNSATSYSINTAPITTGYLETVINTSHPVSKLKFRPKYVHNMLNSLIATSSMGEDSDVTIYSLARKHIPQNILTTAAPSLGFVWWNEDIVFNIDKQSVISAWDIRYEPTLLDNLPKGIVKWRDMDGSGLVFVAQEKGTYSMDNGGVTDSVGKGAANRMSNTTLNSTNNMGRDQEVFTYSFQQQYKHQDQEAADRESDHDKELEKERETEVDQHYHYLREQEREHHQEYQEWEHEPFGRHDDHQGNPQTDFYSHAYSDRPMLSKALSTYSSKIASPILSYYGAQTLSHHTSIVSNSPSISGAALEYPGGIESPIMITLDLPQVFGSVRASRLADRKTSKNKGNAPAVRESAVDIFKYLVRELELCHVQERNDPKSISVDDRSKSLDDTELKIQLMENIGLSEHNTWATLIRSTTSMDTNDPAGSHTQGHSKLVDMVKLQGSNILSPDNSDMEDDLGDKLDEMGTARLQENVNHLVGLIFLSTHNAETYASVNDLQNFKIWMLIRDSLLNDLKEAADGSTGRRDASGGAANSDKNGIYTTTSTVNHARQDSITSNFSSFEPSDISRSDGEEKLNLGRLSEQNLKATNQNTTAKLDDTRKLASSSSLNSSEPLLLLEGGNQAKEQSIGLSDLKTCLKERYTASNESVLDIEEESSATVAYSSKQANTECSSSIPIRKTEARTSFIDTIMTNLRSPGLSHLDVDNDAIFGKGKTSTSLGSGASKRSSMHSTDSYHKRPYSSPITYSKITTAAQKAKLGLADHDGLPNRGSISFLANIDAAHADKLLLGKLGLASSPDDGKLLPPWDTGRLIQQLYRYSVETGNIILTVCIILLFQTMYKVTSTRIVKSTLAEFITILHRYEMFEISAHLLKNCPWDDILGAGSGQSTVRLFCENCGKLIVNEHSKTILSKRHQAGESNMTNFGYWYCDSCRKPNSLCVYCEQPMKKLALSFLNCGHGGHFECLQQWFLDEGMSECPSGCSGVLL</sequence>